<gene>
    <name evidence="1" type="primary">rpmI</name>
    <name type="ordered locus">Gbem_1992</name>
</gene>
<feature type="chain" id="PRO_1000127358" description="Large ribosomal subunit protein bL35">
    <location>
        <begin position="1"/>
        <end position="65"/>
    </location>
</feature>
<protein>
    <recommendedName>
        <fullName evidence="1">Large ribosomal subunit protein bL35</fullName>
    </recommendedName>
    <alternativeName>
        <fullName evidence="2">50S ribosomal protein L35</fullName>
    </alternativeName>
</protein>
<accession>B5EBY1</accession>
<reference key="1">
    <citation type="submission" date="2008-07" db="EMBL/GenBank/DDBJ databases">
        <title>Complete sequence of Geobacter bemidjiensis BEM.</title>
        <authorList>
            <consortium name="US DOE Joint Genome Institute"/>
            <person name="Lucas S."/>
            <person name="Copeland A."/>
            <person name="Lapidus A."/>
            <person name="Glavina del Rio T."/>
            <person name="Dalin E."/>
            <person name="Tice H."/>
            <person name="Bruce D."/>
            <person name="Goodwin L."/>
            <person name="Pitluck S."/>
            <person name="Kiss H."/>
            <person name="Brettin T."/>
            <person name="Detter J.C."/>
            <person name="Han C."/>
            <person name="Kuske C.R."/>
            <person name="Schmutz J."/>
            <person name="Larimer F."/>
            <person name="Land M."/>
            <person name="Hauser L."/>
            <person name="Kyrpides N."/>
            <person name="Lykidis A."/>
            <person name="Lovley D."/>
            <person name="Richardson P."/>
        </authorList>
    </citation>
    <scope>NUCLEOTIDE SEQUENCE [LARGE SCALE GENOMIC DNA]</scope>
    <source>
        <strain>ATCC BAA-1014 / DSM 16622 / JCM 12645 / Bem</strain>
    </source>
</reference>
<organism>
    <name type="scientific">Citrifermentans bemidjiense (strain ATCC BAA-1014 / DSM 16622 / JCM 12645 / Bem)</name>
    <name type="common">Geobacter bemidjiensis</name>
    <dbReference type="NCBI Taxonomy" id="404380"/>
    <lineage>
        <taxon>Bacteria</taxon>
        <taxon>Pseudomonadati</taxon>
        <taxon>Thermodesulfobacteriota</taxon>
        <taxon>Desulfuromonadia</taxon>
        <taxon>Geobacterales</taxon>
        <taxon>Geobacteraceae</taxon>
        <taxon>Citrifermentans</taxon>
    </lineage>
</organism>
<comment type="similarity">
    <text evidence="1">Belongs to the bacterial ribosomal protein bL35 family.</text>
</comment>
<dbReference type="EMBL" id="CP001124">
    <property type="protein sequence ID" value="ACH39005.1"/>
    <property type="molecule type" value="Genomic_DNA"/>
</dbReference>
<dbReference type="RefSeq" id="WP_012530424.1">
    <property type="nucleotide sequence ID" value="NC_011146.1"/>
</dbReference>
<dbReference type="SMR" id="B5EBY1"/>
<dbReference type="STRING" id="404380.Gbem_1992"/>
<dbReference type="KEGG" id="gbm:Gbem_1992"/>
<dbReference type="eggNOG" id="COG0291">
    <property type="taxonomic scope" value="Bacteria"/>
</dbReference>
<dbReference type="HOGENOM" id="CLU_169643_4_3_7"/>
<dbReference type="OrthoDB" id="9804851at2"/>
<dbReference type="Proteomes" id="UP000008825">
    <property type="component" value="Chromosome"/>
</dbReference>
<dbReference type="GO" id="GO:0022625">
    <property type="term" value="C:cytosolic large ribosomal subunit"/>
    <property type="evidence" value="ECO:0007669"/>
    <property type="project" value="TreeGrafter"/>
</dbReference>
<dbReference type="GO" id="GO:0003735">
    <property type="term" value="F:structural constituent of ribosome"/>
    <property type="evidence" value="ECO:0007669"/>
    <property type="project" value="InterPro"/>
</dbReference>
<dbReference type="GO" id="GO:0006412">
    <property type="term" value="P:translation"/>
    <property type="evidence" value="ECO:0007669"/>
    <property type="project" value="UniProtKB-UniRule"/>
</dbReference>
<dbReference type="FunFam" id="4.10.410.60:FF:000001">
    <property type="entry name" value="50S ribosomal protein L35"/>
    <property type="match status" value="1"/>
</dbReference>
<dbReference type="Gene3D" id="4.10.410.60">
    <property type="match status" value="1"/>
</dbReference>
<dbReference type="HAMAP" id="MF_00514">
    <property type="entry name" value="Ribosomal_bL35"/>
    <property type="match status" value="1"/>
</dbReference>
<dbReference type="InterPro" id="IPR001706">
    <property type="entry name" value="Ribosomal_bL35"/>
</dbReference>
<dbReference type="InterPro" id="IPR021137">
    <property type="entry name" value="Ribosomal_bL35-like"/>
</dbReference>
<dbReference type="InterPro" id="IPR018265">
    <property type="entry name" value="Ribosomal_bL35_CS"/>
</dbReference>
<dbReference type="InterPro" id="IPR037229">
    <property type="entry name" value="Ribosomal_bL35_sf"/>
</dbReference>
<dbReference type="NCBIfam" id="TIGR00001">
    <property type="entry name" value="rpmI_bact"/>
    <property type="match status" value="1"/>
</dbReference>
<dbReference type="PANTHER" id="PTHR33343">
    <property type="entry name" value="54S RIBOSOMAL PROTEIN BL35M"/>
    <property type="match status" value="1"/>
</dbReference>
<dbReference type="PANTHER" id="PTHR33343:SF1">
    <property type="entry name" value="LARGE RIBOSOMAL SUBUNIT PROTEIN BL35M"/>
    <property type="match status" value="1"/>
</dbReference>
<dbReference type="Pfam" id="PF01632">
    <property type="entry name" value="Ribosomal_L35p"/>
    <property type="match status" value="1"/>
</dbReference>
<dbReference type="PRINTS" id="PR00064">
    <property type="entry name" value="RIBOSOMALL35"/>
</dbReference>
<dbReference type="SUPFAM" id="SSF143034">
    <property type="entry name" value="L35p-like"/>
    <property type="match status" value="1"/>
</dbReference>
<dbReference type="PROSITE" id="PS00936">
    <property type="entry name" value="RIBOSOMAL_L35"/>
    <property type="match status" value="1"/>
</dbReference>
<evidence type="ECO:0000255" key="1">
    <source>
        <dbReference type="HAMAP-Rule" id="MF_00514"/>
    </source>
</evidence>
<evidence type="ECO:0000305" key="2"/>
<sequence>MPKMKTHRGAAKRFSKTGTGKIKMAHAFTSHILTSKTRKNKRNLRKGGIVAASDHKNISCLIPYK</sequence>
<keyword id="KW-1185">Reference proteome</keyword>
<keyword id="KW-0687">Ribonucleoprotein</keyword>
<keyword id="KW-0689">Ribosomal protein</keyword>
<name>RL35_CITBB</name>
<proteinExistence type="inferred from homology"/>